<evidence type="ECO:0000250" key="1"/>
<evidence type="ECO:0000305" key="2"/>
<accession>B6QAW7</accession>
<name>AMPP2_TALMQ</name>
<sequence length="386" mass="42492">MGPTISIGEALDRYDIDNARYAGSLQTDISAWLRLRNDDSQIIILHPDHRPPVKYEQDIFETESLVPAMNAARGVKDSYEIELIRKANIVSGLAHTAVLEKIGQMTNESDIAGLFLETCMTHGAPEQAYGIIAASGENGATLHYMKNNEDFGSRLSVCLDAGAEYECYASDVTRTFPISSTGEWPTTEARDIYLAVERMQEECIRMIKPGVRFRDVHIHASVVAVEELLKLGVFKEGNSVDEIMASGAVSVFFPHGLGHHVGLEVHDVSEQSVMAATDDMSPRMRARGFLMQPASMMSAALLEANMIVTVEPGIYFNRLALKNARTLPIARFIDFDVVERYYAIGGVRIEDDILVTTDGYENLTTAPKGDAALAIIRKSSVKNSRS</sequence>
<reference key="1">
    <citation type="journal article" date="2015" name="Genome Announc.">
        <title>Genome sequence of the AIDS-associated pathogen Penicillium marneffei (ATCC18224) and its near taxonomic relative Talaromyces stipitatus (ATCC10500).</title>
        <authorList>
            <person name="Nierman W.C."/>
            <person name="Fedorova-Abrams N.D."/>
            <person name="Andrianopoulos A."/>
        </authorList>
    </citation>
    <scope>NUCLEOTIDE SEQUENCE [LARGE SCALE GENOMIC DNA]</scope>
    <source>
        <strain>ATCC 18224 / CBS 334.59 / QM 7333</strain>
    </source>
</reference>
<keyword id="KW-0031">Aminopeptidase</keyword>
<keyword id="KW-0378">Hydrolase</keyword>
<keyword id="KW-0464">Manganese</keyword>
<keyword id="KW-0479">Metal-binding</keyword>
<keyword id="KW-0482">Metalloprotease</keyword>
<keyword id="KW-0645">Protease</keyword>
<keyword id="KW-1185">Reference proteome</keyword>
<proteinExistence type="inferred from homology"/>
<organism>
    <name type="scientific">Talaromyces marneffei (strain ATCC 18224 / CBS 334.59 / QM 7333)</name>
    <name type="common">Penicillium marneffei</name>
    <dbReference type="NCBI Taxonomy" id="441960"/>
    <lineage>
        <taxon>Eukaryota</taxon>
        <taxon>Fungi</taxon>
        <taxon>Dikarya</taxon>
        <taxon>Ascomycota</taxon>
        <taxon>Pezizomycotina</taxon>
        <taxon>Eurotiomycetes</taxon>
        <taxon>Eurotiomycetidae</taxon>
        <taxon>Eurotiales</taxon>
        <taxon>Trichocomaceae</taxon>
        <taxon>Talaromyces</taxon>
        <taxon>Talaromyces sect. Talaromyces</taxon>
    </lineage>
</organism>
<comment type="function">
    <text evidence="1">Catalyzes the removal of a penultimate prolyl residue from the N-termini of peptides.</text>
</comment>
<comment type="catalytic activity">
    <reaction>
        <text>Release of any N-terminal amino acid, including proline, that is linked to proline, even from a dipeptide or tripeptide.</text>
        <dbReference type="EC" id="3.4.11.9"/>
    </reaction>
</comment>
<comment type="cofactor">
    <cofactor evidence="1">
        <name>Mn(2+)</name>
        <dbReference type="ChEBI" id="CHEBI:29035"/>
    </cofactor>
    <text evidence="1">Binds 2 manganese ions per subunit.</text>
</comment>
<comment type="similarity">
    <text evidence="2">Belongs to the peptidase M24B family.</text>
</comment>
<gene>
    <name type="ORF">PMAA_074180</name>
</gene>
<feature type="chain" id="PRO_0000411846" description="Probable Xaa-Pro aminopeptidase PMAA_074180">
    <location>
        <begin position="1"/>
        <end position="386"/>
    </location>
</feature>
<feature type="binding site" evidence="1">
    <location>
        <position position="160"/>
    </location>
    <ligand>
        <name>Mn(2+)</name>
        <dbReference type="ChEBI" id="CHEBI:29035"/>
        <label>2</label>
    </ligand>
</feature>
<feature type="binding site" evidence="1">
    <location>
        <position position="171"/>
    </location>
    <ligand>
        <name>Mn(2+)</name>
        <dbReference type="ChEBI" id="CHEBI:29035"/>
        <label>1</label>
    </ligand>
</feature>
<feature type="binding site" evidence="1">
    <location>
        <position position="171"/>
    </location>
    <ligand>
        <name>Mn(2+)</name>
        <dbReference type="ChEBI" id="CHEBI:29035"/>
        <label>2</label>
    </ligand>
</feature>
<feature type="binding site" evidence="1">
    <location>
        <position position="311"/>
    </location>
    <ligand>
        <name>Mn(2+)</name>
        <dbReference type="ChEBI" id="CHEBI:29035"/>
        <label>1</label>
    </ligand>
</feature>
<feature type="binding site" evidence="1">
    <location>
        <position position="350"/>
    </location>
    <ligand>
        <name>Mn(2+)</name>
        <dbReference type="ChEBI" id="CHEBI:29035"/>
        <label>1</label>
    </ligand>
</feature>
<feature type="binding site" evidence="1">
    <location>
        <position position="350"/>
    </location>
    <ligand>
        <name>Mn(2+)</name>
        <dbReference type="ChEBI" id="CHEBI:29035"/>
        <label>2</label>
    </ligand>
</feature>
<protein>
    <recommendedName>
        <fullName>Probable Xaa-Pro aminopeptidase PMAA_074180</fullName>
        <ecNumber>3.4.11.9</ecNumber>
    </recommendedName>
    <alternativeName>
        <fullName>Aminoacylproline aminopeptidase</fullName>
    </alternativeName>
    <alternativeName>
        <fullName>Prolidase</fullName>
    </alternativeName>
</protein>
<dbReference type="EC" id="3.4.11.9"/>
<dbReference type="EMBL" id="DS995900">
    <property type="protein sequence ID" value="EEA26345.1"/>
    <property type="molecule type" value="Genomic_DNA"/>
</dbReference>
<dbReference type="RefSeq" id="XP_002146892.1">
    <property type="nucleotide sequence ID" value="XM_002146856.1"/>
</dbReference>
<dbReference type="SMR" id="B6QAW7"/>
<dbReference type="STRING" id="441960.B6QAW7"/>
<dbReference type="VEuPathDB" id="FungiDB:PMAA_074180"/>
<dbReference type="HOGENOM" id="CLU_017266_1_2_1"/>
<dbReference type="OrthoDB" id="3744at28568"/>
<dbReference type="PhylomeDB" id="B6QAW7"/>
<dbReference type="Proteomes" id="UP000001294">
    <property type="component" value="Unassembled WGS sequence"/>
</dbReference>
<dbReference type="GO" id="GO:0004177">
    <property type="term" value="F:aminopeptidase activity"/>
    <property type="evidence" value="ECO:0007669"/>
    <property type="project" value="UniProtKB-KW"/>
</dbReference>
<dbReference type="GO" id="GO:0046872">
    <property type="term" value="F:metal ion binding"/>
    <property type="evidence" value="ECO:0007669"/>
    <property type="project" value="UniProtKB-KW"/>
</dbReference>
<dbReference type="GO" id="GO:0008237">
    <property type="term" value="F:metallopeptidase activity"/>
    <property type="evidence" value="ECO:0007669"/>
    <property type="project" value="UniProtKB-KW"/>
</dbReference>
<dbReference type="GO" id="GO:0006508">
    <property type="term" value="P:proteolysis"/>
    <property type="evidence" value="ECO:0007669"/>
    <property type="project" value="UniProtKB-KW"/>
</dbReference>
<dbReference type="CDD" id="cd01087">
    <property type="entry name" value="Prolidase"/>
    <property type="match status" value="1"/>
</dbReference>
<dbReference type="Gene3D" id="3.90.230.10">
    <property type="entry name" value="Creatinase/methionine aminopeptidase superfamily"/>
    <property type="match status" value="1"/>
</dbReference>
<dbReference type="InterPro" id="IPR036005">
    <property type="entry name" value="Creatinase/aminopeptidase-like"/>
</dbReference>
<dbReference type="InterPro" id="IPR000994">
    <property type="entry name" value="Pept_M24"/>
</dbReference>
<dbReference type="InterPro" id="IPR001131">
    <property type="entry name" value="Peptidase_M24B_aminopep-P_CS"/>
</dbReference>
<dbReference type="InterPro" id="IPR052433">
    <property type="entry name" value="X-Pro_dipept-like"/>
</dbReference>
<dbReference type="PANTHER" id="PTHR43226">
    <property type="entry name" value="XAA-PRO AMINOPEPTIDASE 3"/>
    <property type="match status" value="1"/>
</dbReference>
<dbReference type="PANTHER" id="PTHR43226:SF3">
    <property type="entry name" value="XAA-PRO AMINOPEPTIDASE AN0832-RELATED"/>
    <property type="match status" value="1"/>
</dbReference>
<dbReference type="Pfam" id="PF00557">
    <property type="entry name" value="Peptidase_M24"/>
    <property type="match status" value="1"/>
</dbReference>
<dbReference type="SUPFAM" id="SSF55920">
    <property type="entry name" value="Creatinase/aminopeptidase"/>
    <property type="match status" value="1"/>
</dbReference>
<dbReference type="PROSITE" id="PS00491">
    <property type="entry name" value="PROLINE_PEPTIDASE"/>
    <property type="match status" value="1"/>
</dbReference>